<proteinExistence type="evidence at protein level"/>
<gene>
    <name evidence="14" type="primary">NECTIN3</name>
    <name type="synonym">PRR3</name>
    <name type="synonym">PVRL3</name>
</gene>
<dbReference type="EMBL" id="AF282874">
    <property type="protein sequence ID" value="AAF97597.1"/>
    <property type="molecule type" value="mRNA"/>
</dbReference>
<dbReference type="EMBL" id="AK075105">
    <property type="protein sequence ID" value="BAC11404.1"/>
    <property type="status" value="ALT_TERM"/>
    <property type="molecule type" value="mRNA"/>
</dbReference>
<dbReference type="EMBL" id="AC133436">
    <property type="status" value="NOT_ANNOTATED_CDS"/>
    <property type="molecule type" value="Genomic_DNA"/>
</dbReference>
<dbReference type="EMBL" id="AC133477">
    <property type="status" value="NOT_ANNOTATED_CDS"/>
    <property type="molecule type" value="Genomic_DNA"/>
</dbReference>
<dbReference type="EMBL" id="AC137833">
    <property type="status" value="NOT_ANNOTATED_CDS"/>
    <property type="molecule type" value="Genomic_DNA"/>
</dbReference>
<dbReference type="EMBL" id="BC001336">
    <property type="protein sequence ID" value="AAH01336.1"/>
    <property type="molecule type" value="mRNA"/>
</dbReference>
<dbReference type="EMBL" id="BC017572">
    <property type="protein sequence ID" value="AAH17572.1"/>
    <property type="status" value="ALT_INIT"/>
    <property type="molecule type" value="mRNA"/>
</dbReference>
<dbReference type="EMBL" id="BC067808">
    <property type="protein sequence ID" value="AAH67808.1"/>
    <property type="molecule type" value="mRNA"/>
</dbReference>
<dbReference type="EMBL" id="AL050071">
    <property type="protein sequence ID" value="CAB43256.1"/>
    <property type="molecule type" value="mRNA"/>
</dbReference>
<dbReference type="CCDS" id="CCDS2957.1">
    <molecule id="Q9NQS3-1"/>
</dbReference>
<dbReference type="CCDS" id="CCDS58842.1">
    <molecule id="Q9NQS3-2"/>
</dbReference>
<dbReference type="CCDS" id="CCDS58843.1">
    <molecule id="Q9NQS3-3"/>
</dbReference>
<dbReference type="PIR" id="T08732">
    <property type="entry name" value="T08732"/>
</dbReference>
<dbReference type="RefSeq" id="NP_001230215.1">
    <molecule id="Q9NQS3-2"/>
    <property type="nucleotide sequence ID" value="NM_001243286.2"/>
</dbReference>
<dbReference type="RefSeq" id="NP_001230217.1">
    <molecule id="Q9NQS3-3"/>
    <property type="nucleotide sequence ID" value="NM_001243288.2"/>
</dbReference>
<dbReference type="RefSeq" id="NP_056295.1">
    <molecule id="Q9NQS3-1"/>
    <property type="nucleotide sequence ID" value="NM_015480.3"/>
</dbReference>
<dbReference type="PDB" id="4FOM">
    <property type="method" value="X-ray"/>
    <property type="resolution" value="3.93 A"/>
    <property type="chains" value="A=58-359"/>
</dbReference>
<dbReference type="PDBsum" id="4FOM"/>
<dbReference type="SMR" id="Q9NQS3"/>
<dbReference type="BioGRID" id="117441">
    <property type="interactions" value="95"/>
</dbReference>
<dbReference type="CORUM" id="Q9NQS3"/>
<dbReference type="DIP" id="DIP-41491N"/>
<dbReference type="FunCoup" id="Q9NQS3">
    <property type="interactions" value="691"/>
</dbReference>
<dbReference type="IntAct" id="Q9NQS3">
    <property type="interactions" value="63"/>
</dbReference>
<dbReference type="MINT" id="Q9NQS3"/>
<dbReference type="STRING" id="9606.ENSP00000418070"/>
<dbReference type="GlyCosmos" id="Q9NQS3">
    <property type="glycosylation" value="9 sites, 2 glycans"/>
</dbReference>
<dbReference type="GlyGen" id="Q9NQS3">
    <property type="glycosylation" value="11 sites, 8 N-linked glycans (2 sites), 3 O-linked glycans (4 sites)"/>
</dbReference>
<dbReference type="iPTMnet" id="Q9NQS3"/>
<dbReference type="PhosphoSitePlus" id="Q9NQS3"/>
<dbReference type="SwissPalm" id="Q9NQS3"/>
<dbReference type="BioMuta" id="NECTIN3"/>
<dbReference type="DMDM" id="74762752"/>
<dbReference type="jPOST" id="Q9NQS3"/>
<dbReference type="MassIVE" id="Q9NQS3"/>
<dbReference type="PaxDb" id="9606-ENSP00000418070"/>
<dbReference type="PeptideAtlas" id="Q9NQS3"/>
<dbReference type="ProteomicsDB" id="20157"/>
<dbReference type="ProteomicsDB" id="82178">
    <molecule id="Q9NQS3-1"/>
</dbReference>
<dbReference type="ProteomicsDB" id="82179">
    <molecule id="Q9NQS3-2"/>
</dbReference>
<dbReference type="Pumba" id="Q9NQS3"/>
<dbReference type="Antibodypedia" id="2646">
    <property type="antibodies" value="362 antibodies from 35 providers"/>
</dbReference>
<dbReference type="DNASU" id="25945"/>
<dbReference type="Ensembl" id="ENST00000319792.7">
    <molecule id="Q9NQS3-2"/>
    <property type="protein sequence ID" value="ENSP00000321514.3"/>
    <property type="gene ID" value="ENSG00000177707.11"/>
</dbReference>
<dbReference type="Ensembl" id="ENST00000485303.6">
    <molecule id="Q9NQS3-1"/>
    <property type="protein sequence ID" value="ENSP00000418070.1"/>
    <property type="gene ID" value="ENSG00000177707.11"/>
</dbReference>
<dbReference type="Ensembl" id="ENST00000493615.5">
    <molecule id="Q9NQS3-3"/>
    <property type="protein sequence ID" value="ENSP00000420579.1"/>
    <property type="gene ID" value="ENSG00000177707.11"/>
</dbReference>
<dbReference type="GeneID" id="25945"/>
<dbReference type="KEGG" id="hsa:25945"/>
<dbReference type="MANE-Select" id="ENST00000485303.6">
    <property type="protein sequence ID" value="ENSP00000418070.1"/>
    <property type="RefSeq nucleotide sequence ID" value="NM_015480.3"/>
    <property type="RefSeq protein sequence ID" value="NP_056295.1"/>
</dbReference>
<dbReference type="UCSC" id="uc003dxt.3">
    <molecule id="Q9NQS3-1"/>
    <property type="organism name" value="human"/>
</dbReference>
<dbReference type="AGR" id="HGNC:17664"/>
<dbReference type="CTD" id="25945"/>
<dbReference type="DisGeNET" id="25945"/>
<dbReference type="GeneCards" id="NECTIN3"/>
<dbReference type="HGNC" id="HGNC:17664">
    <property type="gene designation" value="NECTIN3"/>
</dbReference>
<dbReference type="HPA" id="ENSG00000177707">
    <property type="expression patterns" value="Tissue enhanced (testis)"/>
</dbReference>
<dbReference type="MalaCards" id="NECTIN3"/>
<dbReference type="MIM" id="607147">
    <property type="type" value="gene"/>
</dbReference>
<dbReference type="neXtProt" id="NX_Q9NQS3"/>
<dbReference type="OpenTargets" id="ENSG00000177707"/>
<dbReference type="PharmGKB" id="PA134969621"/>
<dbReference type="VEuPathDB" id="HostDB:ENSG00000177707"/>
<dbReference type="eggNOG" id="ENOG502QTRU">
    <property type="taxonomic scope" value="Eukaryota"/>
</dbReference>
<dbReference type="GeneTree" id="ENSGT00940000156028"/>
<dbReference type="HOGENOM" id="CLU_029618_3_0_1"/>
<dbReference type="InParanoid" id="Q9NQS3"/>
<dbReference type="OMA" id="NEITHQR"/>
<dbReference type="OrthoDB" id="9442762at2759"/>
<dbReference type="PAN-GO" id="Q9NQS3">
    <property type="GO annotations" value="4 GO annotations based on evolutionary models"/>
</dbReference>
<dbReference type="PhylomeDB" id="Q9NQS3"/>
<dbReference type="TreeFam" id="TF331051"/>
<dbReference type="PathwayCommons" id="Q9NQS3"/>
<dbReference type="Reactome" id="R-HSA-418990">
    <property type="pathway name" value="Adherens junctions interactions"/>
</dbReference>
<dbReference type="Reactome" id="R-HSA-420597">
    <property type="pathway name" value="Nectin/Necl trans heterodimerization"/>
</dbReference>
<dbReference type="SignaLink" id="Q9NQS3"/>
<dbReference type="BioGRID-ORCS" id="25945">
    <property type="hits" value="13 hits in 1145 CRISPR screens"/>
</dbReference>
<dbReference type="ChiTaRS" id="NECTIN3">
    <property type="organism name" value="human"/>
</dbReference>
<dbReference type="EvolutionaryTrace" id="Q9NQS3"/>
<dbReference type="GeneWiki" id="PVRL3"/>
<dbReference type="GenomeRNAi" id="25945"/>
<dbReference type="Pharos" id="Q9NQS3">
    <property type="development level" value="Tbio"/>
</dbReference>
<dbReference type="PRO" id="PR:Q9NQS3"/>
<dbReference type="Proteomes" id="UP000005640">
    <property type="component" value="Chromosome 3"/>
</dbReference>
<dbReference type="RNAct" id="Q9NQS3">
    <property type="molecule type" value="protein"/>
</dbReference>
<dbReference type="Bgee" id="ENSG00000177707">
    <property type="expression patterns" value="Expressed in stromal cell of endometrium and 167 other cell types or tissues"/>
</dbReference>
<dbReference type="ExpressionAtlas" id="Q9NQS3">
    <property type="expression patterns" value="baseline and differential"/>
</dbReference>
<dbReference type="GO" id="GO:0005912">
    <property type="term" value="C:adherens junction"/>
    <property type="evidence" value="ECO:0000318"/>
    <property type="project" value="GO_Central"/>
</dbReference>
<dbReference type="GO" id="GO:0043296">
    <property type="term" value="C:apical junction complex"/>
    <property type="evidence" value="ECO:0000318"/>
    <property type="project" value="GO_Central"/>
</dbReference>
<dbReference type="GO" id="GO:0030424">
    <property type="term" value="C:axon"/>
    <property type="evidence" value="ECO:0007669"/>
    <property type="project" value="Ensembl"/>
</dbReference>
<dbReference type="GO" id="GO:0044291">
    <property type="term" value="C:cell-cell contact zone"/>
    <property type="evidence" value="ECO:0007669"/>
    <property type="project" value="Ensembl"/>
</dbReference>
<dbReference type="GO" id="GO:0005911">
    <property type="term" value="C:cell-cell junction"/>
    <property type="evidence" value="ECO:0000250"/>
    <property type="project" value="ARUK-UCL"/>
</dbReference>
<dbReference type="GO" id="GO:0030425">
    <property type="term" value="C:dendrite"/>
    <property type="evidence" value="ECO:0007669"/>
    <property type="project" value="Ensembl"/>
</dbReference>
<dbReference type="GO" id="GO:0098686">
    <property type="term" value="C:hippocampal mossy fiber to CA3 synapse"/>
    <property type="evidence" value="ECO:0007669"/>
    <property type="project" value="Ensembl"/>
</dbReference>
<dbReference type="GO" id="GO:0005886">
    <property type="term" value="C:plasma membrane"/>
    <property type="evidence" value="ECO:0000250"/>
    <property type="project" value="UniProtKB"/>
</dbReference>
<dbReference type="GO" id="GO:0098839">
    <property type="term" value="C:postsynaptic density membrane"/>
    <property type="evidence" value="ECO:0007669"/>
    <property type="project" value="Ensembl"/>
</dbReference>
<dbReference type="GO" id="GO:0098631">
    <property type="term" value="F:cell adhesion mediator activity"/>
    <property type="evidence" value="ECO:0000250"/>
    <property type="project" value="UniProtKB"/>
</dbReference>
<dbReference type="GO" id="GO:0050839">
    <property type="term" value="F:cell adhesion molecule binding"/>
    <property type="evidence" value="ECO:0000353"/>
    <property type="project" value="BHF-UCL"/>
</dbReference>
<dbReference type="GO" id="GO:0042802">
    <property type="term" value="F:identical protein binding"/>
    <property type="evidence" value="ECO:0000353"/>
    <property type="project" value="IntAct"/>
</dbReference>
<dbReference type="GO" id="GO:0042803">
    <property type="term" value="F:protein homodimerization activity"/>
    <property type="evidence" value="ECO:0000250"/>
    <property type="project" value="HGNC-UCL"/>
</dbReference>
<dbReference type="GO" id="GO:0090103">
    <property type="term" value="P:cochlea morphogenesis"/>
    <property type="evidence" value="ECO:0000250"/>
    <property type="project" value="UniProtKB"/>
</dbReference>
<dbReference type="GO" id="GO:0061951">
    <property type="term" value="P:establishment of protein localization to plasma membrane"/>
    <property type="evidence" value="ECO:0000250"/>
    <property type="project" value="ARUK-UCL"/>
</dbReference>
<dbReference type="GO" id="GO:0009566">
    <property type="term" value="P:fertilization"/>
    <property type="evidence" value="ECO:0007669"/>
    <property type="project" value="Ensembl"/>
</dbReference>
<dbReference type="GO" id="GO:0007157">
    <property type="term" value="P:heterophilic cell-cell adhesion via plasma membrane cell adhesion molecules"/>
    <property type="evidence" value="ECO:0000250"/>
    <property type="project" value="UniProtKB"/>
</dbReference>
<dbReference type="GO" id="GO:0007156">
    <property type="term" value="P:homophilic cell adhesion via plasma membrane adhesion molecules"/>
    <property type="evidence" value="ECO:0000250"/>
    <property type="project" value="HGNC-UCL"/>
</dbReference>
<dbReference type="GO" id="GO:0002089">
    <property type="term" value="P:lens morphogenesis in camera-type eye"/>
    <property type="evidence" value="ECO:0007669"/>
    <property type="project" value="Ensembl"/>
</dbReference>
<dbReference type="GO" id="GO:1902414">
    <property type="term" value="P:protein localization to cell junction"/>
    <property type="evidence" value="ECO:0007669"/>
    <property type="project" value="Ensembl"/>
</dbReference>
<dbReference type="GO" id="GO:0150052">
    <property type="term" value="P:regulation of postsynapse assembly"/>
    <property type="evidence" value="ECO:0007669"/>
    <property type="project" value="Ensembl"/>
</dbReference>
<dbReference type="GO" id="GO:0060042">
    <property type="term" value="P:retina morphogenesis in camera-type eye"/>
    <property type="evidence" value="ECO:0007669"/>
    <property type="project" value="Ensembl"/>
</dbReference>
<dbReference type="GO" id="GO:0046718">
    <property type="term" value="P:symbiont entry into host cell"/>
    <property type="evidence" value="ECO:0007669"/>
    <property type="project" value="InterPro"/>
</dbReference>
<dbReference type="CDD" id="cd07704">
    <property type="entry name" value="IgC1_2_Nectin-3-4_like"/>
    <property type="match status" value="1"/>
</dbReference>
<dbReference type="CDD" id="cd05887">
    <property type="entry name" value="IgV_1_Nectin-3_like"/>
    <property type="match status" value="1"/>
</dbReference>
<dbReference type="CDD" id="cd12087">
    <property type="entry name" value="TM_EGFR-like"/>
    <property type="match status" value="1"/>
</dbReference>
<dbReference type="FunFam" id="2.60.40.10:FF:000298">
    <property type="entry name" value="Nectin cell adhesion molecule 3"/>
    <property type="match status" value="1"/>
</dbReference>
<dbReference type="FunFam" id="2.60.40.10:FF:000378">
    <property type="entry name" value="Nectin cell adhesion molecule 3"/>
    <property type="match status" value="1"/>
</dbReference>
<dbReference type="FunFam" id="2.60.40.10:FF:000511">
    <property type="entry name" value="Nectin cell adhesion molecule 3"/>
    <property type="match status" value="1"/>
</dbReference>
<dbReference type="Gene3D" id="2.60.40.10">
    <property type="entry name" value="Immunoglobulins"/>
    <property type="match status" value="3"/>
</dbReference>
<dbReference type="InterPro" id="IPR013162">
    <property type="entry name" value="CD80_C2-set"/>
</dbReference>
<dbReference type="InterPro" id="IPR007110">
    <property type="entry name" value="Ig-like_dom"/>
</dbReference>
<dbReference type="InterPro" id="IPR036179">
    <property type="entry name" value="Ig-like_dom_sf"/>
</dbReference>
<dbReference type="InterPro" id="IPR013783">
    <property type="entry name" value="Ig-like_fold"/>
</dbReference>
<dbReference type="InterPro" id="IPR003599">
    <property type="entry name" value="Ig_sub"/>
</dbReference>
<dbReference type="InterPro" id="IPR013106">
    <property type="entry name" value="Ig_V-set"/>
</dbReference>
<dbReference type="InterPro" id="IPR033320">
    <property type="entry name" value="IgC1_2_Nectin-3-4-like"/>
</dbReference>
<dbReference type="InterPro" id="IPR033319">
    <property type="entry name" value="Nectin-3_IgV_dom"/>
</dbReference>
<dbReference type="InterPro" id="IPR051427">
    <property type="entry name" value="Nectin/Nectin-like"/>
</dbReference>
<dbReference type="PANTHER" id="PTHR23277:SF12">
    <property type="entry name" value="NECTIN-3"/>
    <property type="match status" value="1"/>
</dbReference>
<dbReference type="PANTHER" id="PTHR23277">
    <property type="entry name" value="NECTIN-RELATED"/>
    <property type="match status" value="1"/>
</dbReference>
<dbReference type="Pfam" id="PF08205">
    <property type="entry name" value="C2-set_2"/>
    <property type="match status" value="1"/>
</dbReference>
<dbReference type="Pfam" id="PF07686">
    <property type="entry name" value="V-set"/>
    <property type="match status" value="1"/>
</dbReference>
<dbReference type="SMART" id="SM00409">
    <property type="entry name" value="IG"/>
    <property type="match status" value="1"/>
</dbReference>
<dbReference type="SUPFAM" id="SSF48726">
    <property type="entry name" value="Immunoglobulin"/>
    <property type="match status" value="3"/>
</dbReference>
<dbReference type="PROSITE" id="PS50835">
    <property type="entry name" value="IG_LIKE"/>
    <property type="match status" value="3"/>
</dbReference>
<comment type="function">
    <text evidence="1 6">Cell adhesion molecule that promotes cell-cell adhesion through heterophilic trans-interactions with nectins-like or other nectins, such as trans-interaction with NECTIN2 at Sertoli-spermatid junctions (PubMed:16216929). Trans-interaction with PVR induces activation of CDC42 and RAC small G proteins through common signaling molecules such as SRC and RAP1 (PubMed:16216929). Induces endocytosis-mediated down-regulation of PVR from the cell surface, resulting in reduction of cell movement and proliferation (PubMed:16216929). Involved in axon guidance by promoting contacts between the commissural axons and the floor plate cells (By similarity). Also involved in the formation of cell-cell junctions, including adherens junctions and synapses (By similarity). Promotes formation of checkerboard-like cellular pattern of hair cells and supporting cells in the auditory epithelium via heterophilic interaction with NECTIN1: NECTIN1 is present in the membrane of hair cells and associates with NECTIN3 on supporting cells, thereby mediating heterotypic adhesion between these two cell types (By similarity). Plays a role in the morphology of the ciliary body (By similarity).</text>
</comment>
<comment type="subunit">
    <text evidence="4 5 6 7 8">Cis- and trans-homodimer. Can form trans-heterodimers with NECTIN1, NECTIN2, PVR, IGSF4B/Necl-1 and with IGSF4. Interaction between NECTIN1 and NECTIN3 on the pre- and postsynaptic sites, respectively, initiates the formation of puncta adherentia junctions between axons and dendrites. Interacts (via Cytoplasmic domain) with AFDN, providing a connection with the actin cytoskeleton. Binds with low affinity to TIGIT.</text>
</comment>
<comment type="subunit">
    <text evidence="9 10">(Microbial infection) Interacts with C.difficile toxin TcdB, suggesting that it may contribute to TcdB toxin entry into cells (PubMed:26038560). It was however shown that NECTIN3/PVRL3 does not act as a major receptor for TcdB (PubMed:27680706).</text>
</comment>
<comment type="interaction">
    <interactant intactId="EBI-2826725">
        <id>Q9NQS3</id>
    </interactant>
    <interactant intactId="EBI-9641086">
        <id>P21333-2</id>
        <label>FLNA</label>
    </interactant>
    <organismsDiffer>false</organismsDiffer>
    <experiments>3</experiments>
</comment>
<comment type="interaction">
    <interactant intactId="EBI-2826725">
        <id>Q9NQS3</id>
    </interactant>
    <interactant intactId="EBI-10172290">
        <id>P60409</id>
        <label>KRTAP10-7</label>
    </interactant>
    <organismsDiffer>false</organismsDiffer>
    <experiments>3</experiments>
</comment>
<comment type="interaction">
    <interactant intactId="EBI-2826725">
        <id>Q9NQS3</id>
    </interactant>
    <interactant intactId="EBI-10171774">
        <id>P60410</id>
        <label>KRTAP10-8</label>
    </interactant>
    <organismsDiffer>false</organismsDiffer>
    <experiments>3</experiments>
</comment>
<comment type="interaction">
    <interactant intactId="EBI-2826725">
        <id>Q9NQS3</id>
    </interactant>
    <interactant intactId="EBI-10172052">
        <id>P60411</id>
        <label>KRTAP10-9</label>
    </interactant>
    <organismsDiffer>false</organismsDiffer>
    <experiments>3</experiments>
</comment>
<comment type="interaction">
    <interactant intactId="EBI-2826725">
        <id>Q9NQS3</id>
    </interactant>
    <interactant intactId="EBI-10172511">
        <id>Q9BYR5</id>
        <label>KRTAP4-2</label>
    </interactant>
    <organismsDiffer>false</organismsDiffer>
    <experiments>3</experiments>
</comment>
<comment type="interaction">
    <interactant intactId="EBI-2826725">
        <id>Q9NQS3</id>
    </interactant>
    <interactant intactId="EBI-1771314">
        <id>Q15223</id>
        <label>NECTIN1</label>
    </interactant>
    <organismsDiffer>false</organismsDiffer>
    <experiments>3</experiments>
</comment>
<comment type="interaction">
    <interactant intactId="EBI-2826725">
        <id>Q9NQS3</id>
    </interactant>
    <interactant intactId="EBI-718419">
        <id>Q92692</id>
        <label>NECTIN2</label>
    </interactant>
    <organismsDiffer>false</organismsDiffer>
    <experiments>4</experiments>
</comment>
<comment type="interaction">
    <interactant intactId="EBI-2826725">
        <id>Q9NQS3</id>
    </interactant>
    <interactant intactId="EBI-945833">
        <id>Q7Z3S9</id>
        <label>NOTCH2NLA</label>
    </interactant>
    <organismsDiffer>false</organismsDiffer>
    <experiments>4</experiments>
</comment>
<comment type="interaction">
    <interactant intactId="EBI-2826725">
        <id>Q9NQS3</id>
    </interactant>
    <interactant intactId="EBI-1052678">
        <id>O76081</id>
        <label>RGS20</label>
    </interactant>
    <organismsDiffer>false</organismsDiffer>
    <experiments>3</experiments>
</comment>
<comment type="interaction">
    <interactant intactId="EBI-2826725">
        <id>Q9NQS3</id>
    </interactant>
    <interactant intactId="EBI-4314807">
        <id>Q495A1</id>
        <label>TIGIT</label>
    </interactant>
    <organismsDiffer>false</organismsDiffer>
    <experiments>2</experiments>
</comment>
<comment type="interaction">
    <interactant intactId="EBI-16007706">
        <id>Q9NQS3-1</id>
    </interactant>
    <interactant intactId="EBI-1771314">
        <id>Q15223</id>
        <label>NECTIN1</label>
    </interactant>
    <organismsDiffer>false</organismsDiffer>
    <experiments>3</experiments>
</comment>
<comment type="interaction">
    <interactant intactId="EBI-16007706">
        <id>Q9NQS3-1</id>
    </interactant>
    <interactant intactId="EBI-718419">
        <id>Q92692</id>
        <label>NECTIN2</label>
    </interactant>
    <organismsDiffer>false</organismsDiffer>
    <experiments>2</experiments>
</comment>
<comment type="interaction">
    <interactant intactId="EBI-16007706">
        <id>Q9NQS3-1</id>
    </interactant>
    <interactant intactId="EBI-16007706">
        <id>Q9NQS3-1</id>
        <label>NECTIN3</label>
    </interactant>
    <organismsDiffer>false</organismsDiffer>
    <experiments>3</experiments>
</comment>
<comment type="interaction">
    <interactant intactId="EBI-12106440">
        <id>Q9NQS3-2</id>
    </interactant>
    <interactant intactId="EBI-3867333">
        <id>A8MQ03</id>
        <label>CYSRT1</label>
    </interactant>
    <organismsDiffer>false</organismsDiffer>
    <experiments>3</experiments>
</comment>
<comment type="interaction">
    <interactant intactId="EBI-12106440">
        <id>Q9NQS3-2</id>
    </interactant>
    <interactant intactId="EBI-11959885">
        <id>Q07627</id>
        <label>KRTAP1-1</label>
    </interactant>
    <organismsDiffer>false</organismsDiffer>
    <experiments>3</experiments>
</comment>
<comment type="interaction">
    <interactant intactId="EBI-12106440">
        <id>Q9NQS3-2</id>
    </interactant>
    <interactant intactId="EBI-11749135">
        <id>Q8IUG1</id>
        <label>KRTAP1-3</label>
    </interactant>
    <organismsDiffer>false</organismsDiffer>
    <experiments>3</experiments>
</comment>
<comment type="interaction">
    <interactant intactId="EBI-12106440">
        <id>Q9NQS3-2</id>
    </interactant>
    <interactant intactId="EBI-10171774">
        <id>P60410</id>
        <label>KRTAP10-8</label>
    </interactant>
    <organismsDiffer>false</organismsDiffer>
    <experiments>3</experiments>
</comment>
<comment type="interaction">
    <interactant intactId="EBI-12106440">
        <id>Q9NQS3-2</id>
    </interactant>
    <interactant intactId="EBI-34579671">
        <id>Q9BYQ7</id>
        <label>KRTAP4-1</label>
    </interactant>
    <organismsDiffer>false</organismsDiffer>
    <experiments>3</experiments>
</comment>
<comment type="interaction">
    <interactant intactId="EBI-12106440">
        <id>Q9NQS3-2</id>
    </interactant>
    <interactant intactId="EBI-11993296">
        <id>Q6L8G4</id>
        <label>KRTAP5-11</label>
    </interactant>
    <organismsDiffer>false</organismsDiffer>
    <experiments>3</experiments>
</comment>
<comment type="interaction">
    <interactant intactId="EBI-12106440">
        <id>Q9NQS3-2</id>
    </interactant>
    <interactant intactId="EBI-3958099">
        <id>P26371</id>
        <label>KRTAP5-9</label>
    </interactant>
    <organismsDiffer>false</organismsDiffer>
    <experiments>3</experiments>
</comment>
<comment type="interaction">
    <interactant intactId="EBI-12106440">
        <id>Q9NQS3-2</id>
    </interactant>
    <interactant intactId="EBI-1043191">
        <id>Q9BYQ3</id>
        <label>KRTAP9-3</label>
    </interactant>
    <organismsDiffer>false</organismsDiffer>
    <experiments>3</experiments>
</comment>
<comment type="interaction">
    <interactant intactId="EBI-12106440">
        <id>Q9NQS3-2</id>
    </interactant>
    <interactant intactId="EBI-22310682">
        <id>P0DPK4</id>
        <label>NOTCH2NLC</label>
    </interactant>
    <organismsDiffer>false</organismsDiffer>
    <experiments>3</experiments>
</comment>
<comment type="interaction">
    <interactant intactId="EBI-12106440">
        <id>Q9NQS3-2</id>
    </interactant>
    <interactant intactId="EBI-740446">
        <id>P32242</id>
        <label>OTX1</label>
    </interactant>
    <organismsDiffer>false</organismsDiffer>
    <experiments>3</experiments>
</comment>
<comment type="subcellular location">
    <subcellularLocation>
        <location evidence="9">Cell membrane</location>
        <topology evidence="2">Single-pass membrane protein</topology>
    </subcellularLocation>
    <subcellularLocation>
        <location evidence="1">Postsynaptic cell membrane</location>
        <topology evidence="2">Single-pass type I membrane protein</topology>
    </subcellularLocation>
    <subcellularLocation>
        <location evidence="1">Cell junction</location>
        <location evidence="1">Adherens junction</location>
    </subcellularLocation>
    <text evidence="1">In the auditory epithelium, specificaly localizes to the apical side of the lateral membranes of supporting cells.</text>
</comment>
<comment type="alternative products">
    <event type="alternative splicing"/>
    <isoform>
        <id>Q9NQS3-1</id>
        <name>1</name>
        <sequence type="displayed"/>
    </isoform>
    <isoform>
        <id>Q9NQS3-2</id>
        <name>2</name>
        <sequence type="described" ref="VSP_017435 VSP_017436"/>
    </isoform>
    <isoform>
        <id>Q9NQS3-3</id>
        <name>3</name>
        <sequence type="described" ref="VSP_046893 VSP_046894"/>
    </isoform>
</comment>
<comment type="tissue specificity">
    <text evidence="4">Predominantly expressed in testis and placenta as well as in many cell lines, including epithelial cell lines.</text>
</comment>
<comment type="similarity">
    <text evidence="13">Belongs to the nectin family.</text>
</comment>
<comment type="sequence caution" evidence="13">
    <molecule>Isoform 1</molecule>
    <conflict type="erroneous initiation">
        <sequence resource="EMBL-CDS" id="AAH17572"/>
    </conflict>
    <text>Truncated N-terminus.</text>
</comment>
<comment type="sequence caution" evidence="13">
    <molecule>Isoform 3</molecule>
    <conflict type="erroneous termination">
        <sequence resource="EMBL-CDS" id="BAC11404"/>
    </conflict>
    <text>Truncated C-terminus.</text>
</comment>
<protein>
    <recommendedName>
        <fullName>Nectin-3</fullName>
    </recommendedName>
    <alternativeName>
        <fullName>CDw113</fullName>
    </alternativeName>
    <alternativeName>
        <fullName evidence="14">Nectin cell adhesion molecule 3</fullName>
    </alternativeName>
    <alternativeName>
        <fullName>Poliovirus receptor-related protein 3</fullName>
    </alternativeName>
    <cdAntigenName>CD113</cdAntigenName>
</protein>
<accession>Q9NQS3</accession>
<accession>E9PFR0</accession>
<accession>Q6NVZ3</accession>
<accession>Q8NC05</accession>
<accession>Q8WVU4</accession>
<accession>Q9BVA9</accession>
<accession>Q9Y412</accession>
<reference key="1">
    <citation type="journal article" date="2000" name="Gene">
        <title>Human nectin3/PRR3: a novel member of the PVR/PRR/nectin family that interacts with afadin.</title>
        <authorList>
            <person name="Reymond N."/>
            <person name="Borg J.-P."/>
            <person name="Lecocq E."/>
            <person name="Adelaide J."/>
            <person name="Campadelli-Fiume G."/>
            <person name="Dubreuil P."/>
            <person name="Lopez M."/>
        </authorList>
    </citation>
    <scope>NUCLEOTIDE SEQUENCE [MRNA] (ISOFORM 1)</scope>
    <scope>TISSUE SPECIFICITY</scope>
    <scope>INTERACTION WITH AFDN</scope>
</reference>
<reference key="2">
    <citation type="journal article" date="2004" name="Nat. Genet.">
        <title>Complete sequencing and characterization of 21,243 full-length human cDNAs.</title>
        <authorList>
            <person name="Ota T."/>
            <person name="Suzuki Y."/>
            <person name="Nishikawa T."/>
            <person name="Otsuki T."/>
            <person name="Sugiyama T."/>
            <person name="Irie R."/>
            <person name="Wakamatsu A."/>
            <person name="Hayashi K."/>
            <person name="Sato H."/>
            <person name="Nagai K."/>
            <person name="Kimura K."/>
            <person name="Makita H."/>
            <person name="Sekine M."/>
            <person name="Obayashi M."/>
            <person name="Nishi T."/>
            <person name="Shibahara T."/>
            <person name="Tanaka T."/>
            <person name="Ishii S."/>
            <person name="Yamamoto J."/>
            <person name="Saito K."/>
            <person name="Kawai Y."/>
            <person name="Isono Y."/>
            <person name="Nakamura Y."/>
            <person name="Nagahari K."/>
            <person name="Murakami K."/>
            <person name="Yasuda T."/>
            <person name="Iwayanagi T."/>
            <person name="Wagatsuma M."/>
            <person name="Shiratori A."/>
            <person name="Sudo H."/>
            <person name="Hosoiri T."/>
            <person name="Kaku Y."/>
            <person name="Kodaira H."/>
            <person name="Kondo H."/>
            <person name="Sugawara M."/>
            <person name="Takahashi M."/>
            <person name="Kanda K."/>
            <person name="Yokoi T."/>
            <person name="Furuya T."/>
            <person name="Kikkawa E."/>
            <person name="Omura Y."/>
            <person name="Abe K."/>
            <person name="Kamihara K."/>
            <person name="Katsuta N."/>
            <person name="Sato K."/>
            <person name="Tanikawa M."/>
            <person name="Yamazaki M."/>
            <person name="Ninomiya K."/>
            <person name="Ishibashi T."/>
            <person name="Yamashita H."/>
            <person name="Murakawa K."/>
            <person name="Fujimori K."/>
            <person name="Tanai H."/>
            <person name="Kimata M."/>
            <person name="Watanabe M."/>
            <person name="Hiraoka S."/>
            <person name="Chiba Y."/>
            <person name="Ishida S."/>
            <person name="Ono Y."/>
            <person name="Takiguchi S."/>
            <person name="Watanabe S."/>
            <person name="Yosida M."/>
            <person name="Hotuta T."/>
            <person name="Kusano J."/>
            <person name="Kanehori K."/>
            <person name="Takahashi-Fujii A."/>
            <person name="Hara H."/>
            <person name="Tanase T.-O."/>
            <person name="Nomura Y."/>
            <person name="Togiya S."/>
            <person name="Komai F."/>
            <person name="Hara R."/>
            <person name="Takeuchi K."/>
            <person name="Arita M."/>
            <person name="Imose N."/>
            <person name="Musashino K."/>
            <person name="Yuuki H."/>
            <person name="Oshima A."/>
            <person name="Sasaki N."/>
            <person name="Aotsuka S."/>
            <person name="Yoshikawa Y."/>
            <person name="Matsunawa H."/>
            <person name="Ichihara T."/>
            <person name="Shiohata N."/>
            <person name="Sano S."/>
            <person name="Moriya S."/>
            <person name="Momiyama H."/>
            <person name="Satoh N."/>
            <person name="Takami S."/>
            <person name="Terashima Y."/>
            <person name="Suzuki O."/>
            <person name="Nakagawa S."/>
            <person name="Senoh A."/>
            <person name="Mizoguchi H."/>
            <person name="Goto Y."/>
            <person name="Shimizu F."/>
            <person name="Wakebe H."/>
            <person name="Hishigaki H."/>
            <person name="Watanabe T."/>
            <person name="Sugiyama A."/>
            <person name="Takemoto M."/>
            <person name="Kawakami B."/>
            <person name="Yamazaki M."/>
            <person name="Watanabe K."/>
            <person name="Kumagai A."/>
            <person name="Itakura S."/>
            <person name="Fukuzumi Y."/>
            <person name="Fujimori Y."/>
            <person name="Komiyama M."/>
            <person name="Tashiro H."/>
            <person name="Tanigami A."/>
            <person name="Fujiwara T."/>
            <person name="Ono T."/>
            <person name="Yamada K."/>
            <person name="Fujii Y."/>
            <person name="Ozaki K."/>
            <person name="Hirao M."/>
            <person name="Ohmori Y."/>
            <person name="Kawabata A."/>
            <person name="Hikiji T."/>
            <person name="Kobatake N."/>
            <person name="Inagaki H."/>
            <person name="Ikema Y."/>
            <person name="Okamoto S."/>
            <person name="Okitani R."/>
            <person name="Kawakami T."/>
            <person name="Noguchi S."/>
            <person name="Itoh T."/>
            <person name="Shigeta K."/>
            <person name="Senba T."/>
            <person name="Matsumura K."/>
            <person name="Nakajima Y."/>
            <person name="Mizuno T."/>
            <person name="Morinaga M."/>
            <person name="Sasaki M."/>
            <person name="Togashi T."/>
            <person name="Oyama M."/>
            <person name="Hata H."/>
            <person name="Watanabe M."/>
            <person name="Komatsu T."/>
            <person name="Mizushima-Sugano J."/>
            <person name="Satoh T."/>
            <person name="Shirai Y."/>
            <person name="Takahashi Y."/>
            <person name="Nakagawa K."/>
            <person name="Okumura K."/>
            <person name="Nagase T."/>
            <person name="Nomura N."/>
            <person name="Kikuchi H."/>
            <person name="Masuho Y."/>
            <person name="Yamashita R."/>
            <person name="Nakai K."/>
            <person name="Yada T."/>
            <person name="Nakamura Y."/>
            <person name="Ohara O."/>
            <person name="Isogai T."/>
            <person name="Sugano S."/>
        </authorList>
    </citation>
    <scope>NUCLEOTIDE SEQUENCE [LARGE SCALE MRNA] (ISOFORM 3)</scope>
    <source>
        <tissue>Placenta</tissue>
    </source>
</reference>
<reference key="3">
    <citation type="journal article" date="2006" name="Nature">
        <title>The DNA sequence, annotation and analysis of human chromosome 3.</title>
        <authorList>
            <person name="Muzny D.M."/>
            <person name="Scherer S.E."/>
            <person name="Kaul R."/>
            <person name="Wang J."/>
            <person name="Yu J."/>
            <person name="Sudbrak R."/>
            <person name="Buhay C.J."/>
            <person name="Chen R."/>
            <person name="Cree A."/>
            <person name="Ding Y."/>
            <person name="Dugan-Rocha S."/>
            <person name="Gill R."/>
            <person name="Gunaratne P."/>
            <person name="Harris R.A."/>
            <person name="Hawes A.C."/>
            <person name="Hernandez J."/>
            <person name="Hodgson A.V."/>
            <person name="Hume J."/>
            <person name="Jackson A."/>
            <person name="Khan Z.M."/>
            <person name="Kovar-Smith C."/>
            <person name="Lewis L.R."/>
            <person name="Lozado R.J."/>
            <person name="Metzker M.L."/>
            <person name="Milosavljevic A."/>
            <person name="Miner G.R."/>
            <person name="Morgan M.B."/>
            <person name="Nazareth L.V."/>
            <person name="Scott G."/>
            <person name="Sodergren E."/>
            <person name="Song X.-Z."/>
            <person name="Steffen D."/>
            <person name="Wei S."/>
            <person name="Wheeler D.A."/>
            <person name="Wright M.W."/>
            <person name="Worley K.C."/>
            <person name="Yuan Y."/>
            <person name="Zhang Z."/>
            <person name="Adams C.Q."/>
            <person name="Ansari-Lari M.A."/>
            <person name="Ayele M."/>
            <person name="Brown M.J."/>
            <person name="Chen G."/>
            <person name="Chen Z."/>
            <person name="Clendenning J."/>
            <person name="Clerc-Blankenburg K.P."/>
            <person name="Chen R."/>
            <person name="Chen Z."/>
            <person name="Davis C."/>
            <person name="Delgado O."/>
            <person name="Dinh H.H."/>
            <person name="Dong W."/>
            <person name="Draper H."/>
            <person name="Ernst S."/>
            <person name="Fu G."/>
            <person name="Gonzalez-Garay M.L."/>
            <person name="Garcia D.K."/>
            <person name="Gillett W."/>
            <person name="Gu J."/>
            <person name="Hao B."/>
            <person name="Haugen E."/>
            <person name="Havlak P."/>
            <person name="He X."/>
            <person name="Hennig S."/>
            <person name="Hu S."/>
            <person name="Huang W."/>
            <person name="Jackson L.R."/>
            <person name="Jacob L.S."/>
            <person name="Kelly S.H."/>
            <person name="Kube M."/>
            <person name="Levy R."/>
            <person name="Li Z."/>
            <person name="Liu B."/>
            <person name="Liu J."/>
            <person name="Liu W."/>
            <person name="Lu J."/>
            <person name="Maheshwari M."/>
            <person name="Nguyen B.-V."/>
            <person name="Okwuonu G.O."/>
            <person name="Palmeiri A."/>
            <person name="Pasternak S."/>
            <person name="Perez L.M."/>
            <person name="Phelps K.A."/>
            <person name="Plopper F.J."/>
            <person name="Qiang B."/>
            <person name="Raymond C."/>
            <person name="Rodriguez R."/>
            <person name="Saenphimmachak C."/>
            <person name="Santibanez J."/>
            <person name="Shen H."/>
            <person name="Shen Y."/>
            <person name="Subramanian S."/>
            <person name="Tabor P.E."/>
            <person name="Verduzco D."/>
            <person name="Waldron L."/>
            <person name="Wang J."/>
            <person name="Wang J."/>
            <person name="Wang Q."/>
            <person name="Williams G.A."/>
            <person name="Wong G.K.-S."/>
            <person name="Yao Z."/>
            <person name="Zhang J."/>
            <person name="Zhang X."/>
            <person name="Zhao G."/>
            <person name="Zhou J."/>
            <person name="Zhou Y."/>
            <person name="Nelson D."/>
            <person name="Lehrach H."/>
            <person name="Reinhardt R."/>
            <person name="Naylor S.L."/>
            <person name="Yang H."/>
            <person name="Olson M."/>
            <person name="Weinstock G."/>
            <person name="Gibbs R.A."/>
        </authorList>
    </citation>
    <scope>NUCLEOTIDE SEQUENCE [LARGE SCALE GENOMIC DNA]</scope>
</reference>
<reference key="4">
    <citation type="journal article" date="2004" name="Genome Res.">
        <title>The status, quality, and expansion of the NIH full-length cDNA project: the Mammalian Gene Collection (MGC).</title>
        <authorList>
            <consortium name="The MGC Project Team"/>
        </authorList>
    </citation>
    <scope>NUCLEOTIDE SEQUENCE [LARGE SCALE MRNA] (ISOFORM 2)</scope>
    <scope>NUCLEOTIDE SEQUENCE [LARGE SCALE MRNA] OF 246-549 (ISOFORM 1)</scope>
    <source>
        <tissue>Brain</tissue>
        <tissue>Cervix</tissue>
        <tissue>Kidney</tissue>
    </source>
</reference>
<reference key="5">
    <citation type="journal article" date="2007" name="BMC Genomics">
        <title>The full-ORF clone resource of the German cDNA consortium.</title>
        <authorList>
            <person name="Bechtel S."/>
            <person name="Rosenfelder H."/>
            <person name="Duda A."/>
            <person name="Schmidt C.P."/>
            <person name="Ernst U."/>
            <person name="Wellenreuther R."/>
            <person name="Mehrle A."/>
            <person name="Schuster C."/>
            <person name="Bahr A."/>
            <person name="Bloecker H."/>
            <person name="Heubner D."/>
            <person name="Hoerlein A."/>
            <person name="Michel G."/>
            <person name="Wedler H."/>
            <person name="Koehrer K."/>
            <person name="Ottenwaelder B."/>
            <person name="Poustka A."/>
            <person name="Wiemann S."/>
            <person name="Schupp I."/>
        </authorList>
    </citation>
    <scope>NUCLEOTIDE SEQUENCE [LARGE SCALE MRNA] OF 143-549 (ISOFORM 1)</scope>
    <source>
        <tissue>Fetal kidney</tissue>
    </source>
</reference>
<reference key="6">
    <citation type="journal article" date="2003" name="J. Biol. Chem.">
        <title>Recruitment of nectin-3 to cell-cell junctions through trans-heterophilic interaction with CD155, a vitronectin and poliovirus receptor that localizes to alpha(v)beta3 integrin-containing membrane microdomains.</title>
        <authorList>
            <person name="Mueller S."/>
            <person name="Wimmer E."/>
        </authorList>
    </citation>
    <scope>INTERACTION WITH PVR</scope>
</reference>
<reference key="7">
    <citation type="journal article" date="2005" name="J. Cell Biol.">
        <title>Inhibition of cell movement and proliferation by cell-cell contact-induced interaction of Necl-5 with nectin-3.</title>
        <authorList>
            <person name="Fujito T."/>
            <person name="Ikeda W."/>
            <person name="Kakunaga S."/>
            <person name="Minami Y."/>
            <person name="Kajita M."/>
            <person name="Sakamoto Y."/>
            <person name="Monden M."/>
            <person name="Takai Y."/>
        </authorList>
    </citation>
    <scope>FUNCTION</scope>
    <scope>INTERACTION WITH PVR</scope>
</reference>
<reference key="8">
    <citation type="journal article" date="2009" name="Nat. Immunol.">
        <title>The surface protein TIGIT suppresses T cell activation by promoting the generation of mature immunoregulatory dendritic cells.</title>
        <authorList>
            <person name="Yu X."/>
            <person name="Harden K."/>
            <person name="Gonzalez L.C."/>
            <person name="Francesco M."/>
            <person name="Chiang E."/>
            <person name="Irving B."/>
            <person name="Tom I."/>
            <person name="Ivelja S."/>
            <person name="Refino C.J."/>
            <person name="Clark H."/>
            <person name="Eaton D."/>
            <person name="Grogan J.L."/>
        </authorList>
    </citation>
    <scope>INTERACTION WITH TIGIT</scope>
</reference>
<reference key="9">
    <citation type="journal article" date="2015" name="Proc. Natl. Acad. Sci. U.S.A.">
        <title>Identification of an epithelial cell receptor responsible for Clostridium difficile TcdB-induced cytotoxicity.</title>
        <authorList>
            <person name="LaFrance M.E."/>
            <person name="Farrow M.A."/>
            <person name="Chandrasekaran R."/>
            <person name="Sheng J."/>
            <person name="Rubin D.H."/>
            <person name="Lacy D.B."/>
        </authorList>
    </citation>
    <scope>INTERACTION WITH C.DIFFICILE TCDB (MICROBIAL INFECTION)</scope>
    <scope>SUBCELLULAR LOCATION</scope>
</reference>
<reference key="10">
    <citation type="journal article" date="2016" name="Nature">
        <title>Frizzled proteins are colonic epithelial receptors for C. difficile toxin B.</title>
        <authorList>
            <person name="Tao L."/>
            <person name="Zhang J."/>
            <person name="Meraner P."/>
            <person name="Tovaglieri A."/>
            <person name="Wu X."/>
            <person name="Gerhard R."/>
            <person name="Zhang X."/>
            <person name="Stallcup W.B."/>
            <person name="Miao J."/>
            <person name="He X."/>
            <person name="Hurdle J.G."/>
            <person name="Breault D.T."/>
            <person name="Brass A.L."/>
            <person name="Dong M."/>
        </authorList>
    </citation>
    <scope>INTERACTION WITH C.DIFFICILE TCDB (MICROBIAL INFECTION)</scope>
</reference>
<reference key="11">
    <citation type="journal article" date="2012" name="Nat. Struct. Mol. Biol.">
        <title>Nectin ectodomain structures reveal a canonical adhesive interface.</title>
        <authorList>
            <person name="Harrison O.J."/>
            <person name="Vendome J."/>
            <person name="Brasch J."/>
            <person name="Jin X."/>
            <person name="Hong S."/>
            <person name="Katsamba P.S."/>
            <person name="Ahlsen G."/>
            <person name="Troyanovsky R.B."/>
            <person name="Troyanovsky S.M."/>
            <person name="Honig B."/>
            <person name="Shapiro L."/>
        </authorList>
    </citation>
    <scope>X-RAY CRYSTALLOGRAPHY (3.93 ANGSTROMS) OF 58-359</scope>
    <scope>SUBUNIT</scope>
    <scope>GLYCOSYLATION AT ASN-73; ASN-125; ASN-186; ASN-222 AND ASN-331</scope>
    <scope>IDENTIFICATION BY MASS SPECTROMETRY</scope>
</reference>
<organism>
    <name type="scientific">Homo sapiens</name>
    <name type="common">Human</name>
    <dbReference type="NCBI Taxonomy" id="9606"/>
    <lineage>
        <taxon>Eukaryota</taxon>
        <taxon>Metazoa</taxon>
        <taxon>Chordata</taxon>
        <taxon>Craniata</taxon>
        <taxon>Vertebrata</taxon>
        <taxon>Euteleostomi</taxon>
        <taxon>Mammalia</taxon>
        <taxon>Eutheria</taxon>
        <taxon>Euarchontoglires</taxon>
        <taxon>Primates</taxon>
        <taxon>Haplorrhini</taxon>
        <taxon>Catarrhini</taxon>
        <taxon>Hominidae</taxon>
        <taxon>Homo</taxon>
    </lineage>
</organism>
<evidence type="ECO:0000250" key="1">
    <source>
        <dbReference type="UniProtKB" id="Q9JLB9"/>
    </source>
</evidence>
<evidence type="ECO:0000255" key="2"/>
<evidence type="ECO:0000255" key="3">
    <source>
        <dbReference type="PROSITE-ProRule" id="PRU00114"/>
    </source>
</evidence>
<evidence type="ECO:0000269" key="4">
    <source>
    </source>
</evidence>
<evidence type="ECO:0000269" key="5">
    <source>
    </source>
</evidence>
<evidence type="ECO:0000269" key="6">
    <source>
    </source>
</evidence>
<evidence type="ECO:0000269" key="7">
    <source>
    </source>
</evidence>
<evidence type="ECO:0000269" key="8">
    <source>
    </source>
</evidence>
<evidence type="ECO:0000269" key="9">
    <source>
    </source>
</evidence>
<evidence type="ECO:0000269" key="10">
    <source>
    </source>
</evidence>
<evidence type="ECO:0000303" key="11">
    <source>
    </source>
</evidence>
<evidence type="ECO:0000303" key="12">
    <source>
    </source>
</evidence>
<evidence type="ECO:0000305" key="13"/>
<evidence type="ECO:0000312" key="14">
    <source>
        <dbReference type="HGNC" id="HGNC:17664"/>
    </source>
</evidence>
<keyword id="KW-0002">3D-structure</keyword>
<keyword id="KW-0025">Alternative splicing</keyword>
<keyword id="KW-0130">Cell adhesion</keyword>
<keyword id="KW-0965">Cell junction</keyword>
<keyword id="KW-1003">Cell membrane</keyword>
<keyword id="KW-1015">Disulfide bond</keyword>
<keyword id="KW-0325">Glycoprotein</keyword>
<keyword id="KW-0393">Immunoglobulin domain</keyword>
<keyword id="KW-0472">Membrane</keyword>
<keyword id="KW-0628">Postsynaptic cell membrane</keyword>
<keyword id="KW-1267">Proteomics identification</keyword>
<keyword id="KW-1185">Reference proteome</keyword>
<keyword id="KW-0677">Repeat</keyword>
<keyword id="KW-0732">Signal</keyword>
<keyword id="KW-0770">Synapse</keyword>
<keyword id="KW-0812">Transmembrane</keyword>
<keyword id="KW-1133">Transmembrane helix</keyword>
<sequence>MARTLRPSPLCPGGGKAQLSSASLLGAGLLLQPPTPPPLLLLLFPLLLFSRLCGALAGPIIVEPHVTAVWGKNVSLKCLIEVNETITQISWEKIHGKSSQTVAVHHPQYGFSVQGEYQGRVLFKNYSLNDATITLHNIGFSDSGKYICKAVTFPLGNAQSSTTVTVLVEPTVSLIKGPDSLIDGGNETVAAICIAATGKPVAHIDWEGDLGEMESTTTSFPNETATIISQYKLFPTRFARGRRITCVVKHPALEKDIRYSFILDIQYAPEVSVTGYDGNWFVGRKGVNLKCNADANPPPFKSVWSRLDGQWPDGLLASDNTLHFVHPLTFNYSGVYICKVTNSLGQRSDQKVIYISDPPTTTTLQPTIQWHPSTADIEDLATEPKKLPFPLSTLATIKDDTIATIIASVVGGALFIVLVSVLAGIFCYRRRRTFRGDYFAKNYIPPSDMQKESQIDVLQQDELDSYPDSVKKENKNPVNNLIRKDYLEEPEKTQWNNVENLNRFERPMDYYEDLKMGMKFVSDEHYDENEDDLVSHVDGSVISRREWYV</sequence>
<feature type="signal peptide" evidence="2">
    <location>
        <begin position="1"/>
        <end position="57"/>
    </location>
</feature>
<feature type="chain" id="PRO_0000226372" description="Nectin-3">
    <location>
        <begin position="58"/>
        <end position="549"/>
    </location>
</feature>
<feature type="topological domain" description="Extracellular" evidence="2">
    <location>
        <begin position="58"/>
        <end position="404"/>
    </location>
</feature>
<feature type="transmembrane region" description="Helical" evidence="2">
    <location>
        <begin position="405"/>
        <end position="425"/>
    </location>
</feature>
<feature type="topological domain" description="Cytoplasmic" evidence="2">
    <location>
        <begin position="426"/>
        <end position="549"/>
    </location>
</feature>
<feature type="domain" description="Ig-like V-type">
    <location>
        <begin position="59"/>
        <end position="165"/>
    </location>
</feature>
<feature type="domain" description="Ig-like C2-type 1">
    <location>
        <begin position="170"/>
        <end position="258"/>
    </location>
</feature>
<feature type="domain" description="Ig-like C2-type 2">
    <location>
        <begin position="269"/>
        <end position="354"/>
    </location>
</feature>
<feature type="glycosylation site" description="N-linked (GlcNAc...) asparagine" evidence="8">
    <location>
        <position position="73"/>
    </location>
</feature>
<feature type="glycosylation site" description="N-linked (GlcNAc...) asparagine" evidence="2">
    <location>
        <position position="83"/>
    </location>
</feature>
<feature type="glycosylation site" description="N-linked (GlcNAc...) asparagine" evidence="8">
    <location>
        <position position="125"/>
    </location>
</feature>
<feature type="glycosylation site" description="N-linked (GlcNAc...) asparagine" evidence="8">
    <location>
        <position position="186"/>
    </location>
</feature>
<feature type="glycosylation site" description="N-linked (GlcNAc...) asparagine" evidence="8">
    <location>
        <position position="222"/>
    </location>
</feature>
<feature type="glycosylation site" description="N-linked (GlcNAc...) asparagine" evidence="8">
    <location>
        <position position="331"/>
    </location>
</feature>
<feature type="disulfide bond" evidence="3">
    <location>
        <begin position="78"/>
        <end position="148"/>
    </location>
</feature>
<feature type="disulfide bond" evidence="3">
    <location>
        <begin position="193"/>
        <end position="246"/>
    </location>
</feature>
<feature type="disulfide bond" evidence="3">
    <location>
        <begin position="291"/>
        <end position="338"/>
    </location>
</feature>
<feature type="splice variant" id="VSP_046893" description="In isoform 3." evidence="11">
    <original>MARTLRPSPLCPGGGKAQLSSASLLGAGLLLQPPTPPPLLLLLFPLLLFSRLCG</original>
    <variation>MAEGWRWCFVRRTPGLLRGPLLPRSFSGNPR</variation>
    <location>
        <begin position="1"/>
        <end position="54"/>
    </location>
</feature>
<feature type="splice variant" id="VSP_046894" description="In isoform 3." evidence="11">
    <original>DPPTTTTLQPTIQWHPSTADIEDLATEPKKLPFPLSTLATIKDDTIATIIASVVGGALFIVLVSVLAGIFCYRRRRTFRGDYFAKNYIPPSDMQKESQIDVLQQDELDSYPDSVKKENKNPVNNLIRKDYLEEPEKTQWNNVENLNRFERPMDYYEDLKMGMKFVSDEHYDENEDDLVSHVDGSVISRREWYV</original>
    <variation>DVPFKQTSSIAVAGAVIGAVLALFIIAIFVTVLLTPRKKRPSYLDKVIDLPPTHKPPPLYEERSPPLPQKDLFQPEHLPLQTQFKEREVGNLQHSNGLNSRSFDYEDENPVGEDGIQQMYPLYNQMCYQDRSPGKHHQNNDPKRVYIDPREHYV</variation>
    <location>
        <begin position="357"/>
        <end position="549"/>
    </location>
</feature>
<feature type="splice variant" id="VSP_017435" description="In isoform 2." evidence="12">
    <original>DPPTTTTLQP</original>
    <variation>AYNSVASLNC</variation>
    <location>
        <begin position="357"/>
        <end position="366"/>
    </location>
</feature>
<feature type="splice variant" id="VSP_017436" description="In isoform 2." evidence="12">
    <location>
        <begin position="367"/>
        <end position="549"/>
    </location>
</feature>
<feature type="sequence variant" id="VAR_049995" description="In dbSNP:rs15611.">
    <original>R</original>
    <variation>L</variation>
    <location>
        <position position="432"/>
    </location>
</feature>
<feature type="sequence conflict" description="In Ref. 4; AAH67808." evidence="13" ref="4">
    <original>P</original>
    <variation>Q</variation>
    <location>
        <position position="251"/>
    </location>
</feature>
<feature type="sequence conflict" description="In Ref. 2; BAC11404." evidence="13" ref="2">
    <original>R</original>
    <variation>G</variation>
    <location>
        <position position="284"/>
    </location>
</feature>
<feature type="sequence conflict" description="In Ref. 4; AAH17572." evidence="13" ref="4">
    <original>K</original>
    <variation>E</variation>
    <location>
        <position position="386"/>
    </location>
</feature>
<feature type="sequence conflict" description="In Ref. 5; CAB43256." evidence="13" ref="5">
    <original>S</original>
    <variation>P</variation>
    <location>
        <position position="465"/>
    </location>
</feature>
<feature type="sequence conflict" description="In Ref. 5; CAB43256." evidence="13" ref="5">
    <original>K</original>
    <variation>R</variation>
    <location>
        <position position="519"/>
    </location>
</feature>
<feature type="sequence conflict" description="In Ref. 5; CAB43256." evidence="13" ref="5">
    <original>Y</original>
    <variation>C</variation>
    <location>
        <position position="548"/>
    </location>
</feature>
<name>NECT3_HUMAN</name>